<evidence type="ECO:0000255" key="1">
    <source>
        <dbReference type="HAMAP-Rule" id="MF_00916"/>
    </source>
</evidence>
<evidence type="ECO:0000305" key="2"/>
<comment type="function">
    <text evidence="1">Catalyzes the conversion of epoxyqueuosine (oQ) to queuosine (Q), which is a hypermodified base found in the wobble positions of tRNA(Asp), tRNA(Asn), tRNA(His) and tRNA(Tyr).</text>
</comment>
<comment type="catalytic activity">
    <reaction evidence="1">
        <text>epoxyqueuosine(34) in tRNA + AH2 = queuosine(34) in tRNA + A + H2O</text>
        <dbReference type="Rhea" id="RHEA:32159"/>
        <dbReference type="Rhea" id="RHEA-COMP:18571"/>
        <dbReference type="Rhea" id="RHEA-COMP:18582"/>
        <dbReference type="ChEBI" id="CHEBI:13193"/>
        <dbReference type="ChEBI" id="CHEBI:15377"/>
        <dbReference type="ChEBI" id="CHEBI:17499"/>
        <dbReference type="ChEBI" id="CHEBI:194431"/>
        <dbReference type="ChEBI" id="CHEBI:194443"/>
        <dbReference type="EC" id="1.17.99.6"/>
    </reaction>
</comment>
<comment type="cofactor">
    <cofactor evidence="1">
        <name>cob(II)alamin</name>
        <dbReference type="ChEBI" id="CHEBI:16304"/>
    </cofactor>
</comment>
<comment type="cofactor">
    <cofactor evidence="1">
        <name>[4Fe-4S] cluster</name>
        <dbReference type="ChEBI" id="CHEBI:49883"/>
    </cofactor>
    <text evidence="1">Binds 2 [4Fe-4S] clusters per monomer.</text>
</comment>
<comment type="pathway">
    <text evidence="1">tRNA modification; tRNA-queuosine biosynthesis.</text>
</comment>
<comment type="subunit">
    <text evidence="1">Monomer.</text>
</comment>
<comment type="subcellular location">
    <subcellularLocation>
        <location evidence="1">Cytoplasm</location>
    </subcellularLocation>
</comment>
<comment type="similarity">
    <text evidence="1">Belongs to the QueG family.</text>
</comment>
<comment type="sequence caution" evidence="2">
    <conflict type="erroneous initiation">
        <sequence resource="EMBL-CDS" id="AEB86358"/>
    </conflict>
    <text>Truncated N-terminus.</text>
</comment>
<dbReference type="EC" id="1.17.99.6" evidence="1"/>
<dbReference type="EMBL" id="CP002657">
    <property type="protein sequence ID" value="AEB86358.1"/>
    <property type="status" value="ALT_INIT"/>
    <property type="molecule type" value="Genomic_DNA"/>
</dbReference>
<dbReference type="RefSeq" id="WP_041701117.1">
    <property type="nucleotide sequence ID" value="NC_015422.1"/>
</dbReference>
<dbReference type="SMR" id="F4G4E2"/>
<dbReference type="STRING" id="596154.Alide2_4039"/>
<dbReference type="KEGG" id="adk:Alide2_4039"/>
<dbReference type="eggNOG" id="COG1600">
    <property type="taxonomic scope" value="Bacteria"/>
</dbReference>
<dbReference type="HOGENOM" id="CLU_030790_0_1_4"/>
<dbReference type="OrthoDB" id="9784571at2"/>
<dbReference type="UniPathway" id="UPA00392"/>
<dbReference type="Proteomes" id="UP000007938">
    <property type="component" value="Chromosome"/>
</dbReference>
<dbReference type="GO" id="GO:0005737">
    <property type="term" value="C:cytoplasm"/>
    <property type="evidence" value="ECO:0007669"/>
    <property type="project" value="UniProtKB-SubCell"/>
</dbReference>
<dbReference type="GO" id="GO:0051539">
    <property type="term" value="F:4 iron, 4 sulfur cluster binding"/>
    <property type="evidence" value="ECO:0007669"/>
    <property type="project" value="UniProtKB-KW"/>
</dbReference>
<dbReference type="GO" id="GO:0052693">
    <property type="term" value="F:epoxyqueuosine reductase activity"/>
    <property type="evidence" value="ECO:0007669"/>
    <property type="project" value="UniProtKB-UniRule"/>
</dbReference>
<dbReference type="GO" id="GO:0046872">
    <property type="term" value="F:metal ion binding"/>
    <property type="evidence" value="ECO:0007669"/>
    <property type="project" value="UniProtKB-KW"/>
</dbReference>
<dbReference type="GO" id="GO:0008616">
    <property type="term" value="P:queuosine biosynthetic process"/>
    <property type="evidence" value="ECO:0007669"/>
    <property type="project" value="UniProtKB-UniRule"/>
</dbReference>
<dbReference type="GO" id="GO:0006400">
    <property type="term" value="P:tRNA modification"/>
    <property type="evidence" value="ECO:0007669"/>
    <property type="project" value="UniProtKB-UniRule"/>
</dbReference>
<dbReference type="FunFam" id="3.30.70.20:FF:000017">
    <property type="entry name" value="Epoxyqueuosine reductase"/>
    <property type="match status" value="1"/>
</dbReference>
<dbReference type="Gene3D" id="3.30.70.20">
    <property type="match status" value="1"/>
</dbReference>
<dbReference type="HAMAP" id="MF_00916">
    <property type="entry name" value="QueG"/>
    <property type="match status" value="1"/>
</dbReference>
<dbReference type="InterPro" id="IPR017896">
    <property type="entry name" value="4Fe4S_Fe-S-bd"/>
</dbReference>
<dbReference type="InterPro" id="IPR017900">
    <property type="entry name" value="4Fe4S_Fe_S_CS"/>
</dbReference>
<dbReference type="InterPro" id="IPR004453">
    <property type="entry name" value="QueG"/>
</dbReference>
<dbReference type="InterPro" id="IPR013542">
    <property type="entry name" value="QueG_DUF1730"/>
</dbReference>
<dbReference type="NCBIfam" id="TIGR00276">
    <property type="entry name" value="tRNA epoxyqueuosine(34) reductase QueG"/>
    <property type="match status" value="1"/>
</dbReference>
<dbReference type="PANTHER" id="PTHR30002">
    <property type="entry name" value="EPOXYQUEUOSINE REDUCTASE"/>
    <property type="match status" value="1"/>
</dbReference>
<dbReference type="PANTHER" id="PTHR30002:SF4">
    <property type="entry name" value="EPOXYQUEUOSINE REDUCTASE"/>
    <property type="match status" value="1"/>
</dbReference>
<dbReference type="Pfam" id="PF13484">
    <property type="entry name" value="Fer4_16"/>
    <property type="match status" value="1"/>
</dbReference>
<dbReference type="Pfam" id="PF08331">
    <property type="entry name" value="QueG_DUF1730"/>
    <property type="match status" value="1"/>
</dbReference>
<dbReference type="SUPFAM" id="SSF54862">
    <property type="entry name" value="4Fe-4S ferredoxins"/>
    <property type="match status" value="1"/>
</dbReference>
<dbReference type="PROSITE" id="PS00198">
    <property type="entry name" value="4FE4S_FER_1"/>
    <property type="match status" value="1"/>
</dbReference>
<dbReference type="PROSITE" id="PS51379">
    <property type="entry name" value="4FE4S_FER_2"/>
    <property type="match status" value="1"/>
</dbReference>
<reference key="1">
    <citation type="submission" date="2011-04" db="EMBL/GenBank/DDBJ databases">
        <title>Complete sequence of chromosome of Alicycliphilus denitrificans K601.</title>
        <authorList>
            <consortium name="US DOE Joint Genome Institute"/>
            <person name="Lucas S."/>
            <person name="Han J."/>
            <person name="Lapidus A."/>
            <person name="Cheng J.-F."/>
            <person name="Goodwin L."/>
            <person name="Pitluck S."/>
            <person name="Peters L."/>
            <person name="Zeytun A."/>
            <person name="Detter J.C."/>
            <person name="Han C."/>
            <person name="Tapia R."/>
            <person name="Land M."/>
            <person name="Hauser L."/>
            <person name="Kyrpides N."/>
            <person name="Ivanova N."/>
            <person name="Mikhailova N."/>
            <person name="Pagani I."/>
            <person name="Oosterkamp M."/>
            <person name="Pieper D."/>
            <person name="van Berkel W."/>
            <person name="Langenhoff A."/>
            <person name="Smidt H."/>
            <person name="Stams A."/>
            <person name="Woyke T."/>
        </authorList>
    </citation>
    <scope>NUCLEOTIDE SEQUENCE [LARGE SCALE GENOMIC DNA]</scope>
    <source>
        <strain>DSM 14773 / CIP 107495 / K601</strain>
    </source>
</reference>
<proteinExistence type="inferred from homology"/>
<organism>
    <name type="scientific">Alicycliphilus denitrificans (strain DSM 14773 / CIP 107495 / K601)</name>
    <dbReference type="NCBI Taxonomy" id="596154"/>
    <lineage>
        <taxon>Bacteria</taxon>
        <taxon>Pseudomonadati</taxon>
        <taxon>Pseudomonadota</taxon>
        <taxon>Betaproteobacteria</taxon>
        <taxon>Burkholderiales</taxon>
        <taxon>Comamonadaceae</taxon>
        <taxon>Alicycliphilus</taxon>
    </lineage>
</organism>
<keyword id="KW-0004">4Fe-4S</keyword>
<keyword id="KW-0963">Cytoplasm</keyword>
<keyword id="KW-0408">Iron</keyword>
<keyword id="KW-0411">Iron-sulfur</keyword>
<keyword id="KW-0479">Metal-binding</keyword>
<keyword id="KW-0560">Oxidoreductase</keyword>
<keyword id="KW-0671">Queuosine biosynthesis</keyword>
<keyword id="KW-1185">Reference proteome</keyword>
<keyword id="KW-0819">tRNA processing</keyword>
<protein>
    <recommendedName>
        <fullName evidence="1">Epoxyqueuosine reductase</fullName>
        <ecNumber evidence="1">1.17.99.6</ecNumber>
    </recommendedName>
    <alternativeName>
        <fullName evidence="1">Queuosine biosynthesis protein QueG</fullName>
    </alternativeName>
</protein>
<accession>F4G4E2</accession>
<gene>
    <name evidence="1" type="primary">queG</name>
    <name type="ordered locus">Alide2_4039</name>
</gene>
<sequence length="360" mass="39605">MVCSSQLVPRIQGWARELGFSQIGVAGVDLSAAEPGLMQWLAEGFHGEMHYMAAHGLRRARPAELVPGTVSVITARMDYLPRTTPEGWQAVEFERLRRPQEAIVSVYARGRDYHKVLRARLQKLSDRIAEAVGPFGHRVFTDSAPVLEAELARRSGQGWRGKHTLVLSREAGSMFFLGEIYLDMALAPTEPVTAHCGSCQACMDVCPTQAIVAPHRVDARRCISYLTIEHAGPIPPALRPLMGNRIYGCDDCQLICPWNKFAQPSSLPDFDARAPLEGQQLAQLFAWDEAMFLRMTEGGPIRRIGHERWLRNIAVALGNALRATRDAGEAGALRAALATRANDASALVREHVAWALAQGI</sequence>
<name>QUEG_ALIDK</name>
<feature type="chain" id="PRO_0000416063" description="Epoxyqueuosine reductase">
    <location>
        <begin position="1"/>
        <end position="360"/>
    </location>
</feature>
<feature type="domain" description="4Fe-4S ferredoxin-type" evidence="1">
    <location>
        <begin position="187"/>
        <end position="216"/>
    </location>
</feature>
<feature type="active site" description="Proton donor" evidence="1">
    <location>
        <position position="142"/>
    </location>
</feature>
<feature type="binding site" evidence="1">
    <location>
        <position position="196"/>
    </location>
    <ligand>
        <name>[4Fe-4S] cluster</name>
        <dbReference type="ChEBI" id="CHEBI:49883"/>
        <label>1</label>
    </ligand>
</feature>
<feature type="binding site" evidence="1">
    <location>
        <position position="199"/>
    </location>
    <ligand>
        <name>[4Fe-4S] cluster</name>
        <dbReference type="ChEBI" id="CHEBI:49883"/>
        <label>1</label>
    </ligand>
</feature>
<feature type="binding site" evidence="1">
    <location>
        <position position="202"/>
    </location>
    <ligand>
        <name>[4Fe-4S] cluster</name>
        <dbReference type="ChEBI" id="CHEBI:49883"/>
        <label>1</label>
    </ligand>
</feature>
<feature type="binding site" evidence="1">
    <location>
        <position position="206"/>
    </location>
    <ligand>
        <name>[4Fe-4S] cluster</name>
        <dbReference type="ChEBI" id="CHEBI:49883"/>
        <label>2</label>
    </ligand>
</feature>
<feature type="binding site" evidence="1">
    <location>
        <position position="222"/>
    </location>
    <ligand>
        <name>[4Fe-4S] cluster</name>
        <dbReference type="ChEBI" id="CHEBI:49883"/>
        <label>2</label>
    </ligand>
</feature>
<feature type="binding site" evidence="1">
    <location>
        <position position="249"/>
    </location>
    <ligand>
        <name>[4Fe-4S] cluster</name>
        <dbReference type="ChEBI" id="CHEBI:49883"/>
        <label>2</label>
    </ligand>
</feature>
<feature type="binding site" evidence="1">
    <location>
        <position position="252"/>
    </location>
    <ligand>
        <name>[4Fe-4S] cluster</name>
        <dbReference type="ChEBI" id="CHEBI:49883"/>
        <label>2</label>
    </ligand>
</feature>
<feature type="binding site" evidence="1">
    <location>
        <position position="256"/>
    </location>
    <ligand>
        <name>[4Fe-4S] cluster</name>
        <dbReference type="ChEBI" id="CHEBI:49883"/>
        <label>1</label>
    </ligand>
</feature>